<organism>
    <name type="scientific">Kluyveromyces lactis (strain ATCC 8585 / CBS 2359 / DSM 70799 / NBRC 1267 / NRRL Y-1140 / WM37)</name>
    <name type="common">Yeast</name>
    <name type="synonym">Candida sphaerica</name>
    <dbReference type="NCBI Taxonomy" id="284590"/>
    <lineage>
        <taxon>Eukaryota</taxon>
        <taxon>Fungi</taxon>
        <taxon>Dikarya</taxon>
        <taxon>Ascomycota</taxon>
        <taxon>Saccharomycotina</taxon>
        <taxon>Saccharomycetes</taxon>
        <taxon>Saccharomycetales</taxon>
        <taxon>Saccharomycetaceae</taxon>
        <taxon>Kluyveromyces</taxon>
    </lineage>
</organism>
<comment type="similarity">
    <text evidence="2">Belongs to the KNR4/SMI1 family.</text>
</comment>
<sequence length="535" mass="59748">MQAFKKKLQQLVYSFSTEDRYADYDEEAANPDVAAGVERSITESNHGSQIQLADYVDGSNPSGNEGINEALLAWRHIDNWTSQHNPDLAATLSDPCTRHDINNAEKDLDIIFPASVRASLRLHDGQEDLVSMTGTGGLFFGLQLMGLDEIVQMTRTWRNVAENLERKNHELQIKMDKHQELNGTTVDLPNQQKGYGKLENQDYKAMDPNLQRNISQNYKKQFKLPDIPDQHSVPPLAIQQVYANSGWIPLVTDNAGNHIGIDLAPGPKGKYGQVILFGREFDTKFVVASNWGDFLLSFANDLELGNWLLIDEGNDQFAGEGELVFRDKKSNGPVRDYLEVLVMRSRMKWNSFTERKLPEEPKRTVSSSQGSQNTVEPAEQQETALTVDETLDEKNDTSLSVDNTGTKQEVKDPETTGTKTGSSAKAEDNLPKTSNPDEVMADGADTQETSKHEQNESTNAVENTETSQEGAVETSEKPEEKPKKQSKKASKKKGKKDEKKDTDSKTKEPEVEEETESHLANSVEKLKDDFENVAL</sequence>
<name>SMI1_KLULA</name>
<proteinExistence type="inferred from homology"/>
<reference key="1">
    <citation type="journal article" date="2004" name="Nature">
        <title>Genome evolution in yeasts.</title>
        <authorList>
            <person name="Dujon B."/>
            <person name="Sherman D."/>
            <person name="Fischer G."/>
            <person name="Durrens P."/>
            <person name="Casaregola S."/>
            <person name="Lafontaine I."/>
            <person name="de Montigny J."/>
            <person name="Marck C."/>
            <person name="Neuveglise C."/>
            <person name="Talla E."/>
            <person name="Goffard N."/>
            <person name="Frangeul L."/>
            <person name="Aigle M."/>
            <person name="Anthouard V."/>
            <person name="Babour A."/>
            <person name="Barbe V."/>
            <person name="Barnay S."/>
            <person name="Blanchin S."/>
            <person name="Beckerich J.-M."/>
            <person name="Beyne E."/>
            <person name="Bleykasten C."/>
            <person name="Boisrame A."/>
            <person name="Boyer J."/>
            <person name="Cattolico L."/>
            <person name="Confanioleri F."/>
            <person name="de Daruvar A."/>
            <person name="Despons L."/>
            <person name="Fabre E."/>
            <person name="Fairhead C."/>
            <person name="Ferry-Dumazet H."/>
            <person name="Groppi A."/>
            <person name="Hantraye F."/>
            <person name="Hennequin C."/>
            <person name="Jauniaux N."/>
            <person name="Joyet P."/>
            <person name="Kachouri R."/>
            <person name="Kerrest A."/>
            <person name="Koszul R."/>
            <person name="Lemaire M."/>
            <person name="Lesur I."/>
            <person name="Ma L."/>
            <person name="Muller H."/>
            <person name="Nicaud J.-M."/>
            <person name="Nikolski M."/>
            <person name="Oztas S."/>
            <person name="Ozier-Kalogeropoulos O."/>
            <person name="Pellenz S."/>
            <person name="Potier S."/>
            <person name="Richard G.-F."/>
            <person name="Straub M.-L."/>
            <person name="Suleau A."/>
            <person name="Swennen D."/>
            <person name="Tekaia F."/>
            <person name="Wesolowski-Louvel M."/>
            <person name="Westhof E."/>
            <person name="Wirth B."/>
            <person name="Zeniou-Meyer M."/>
            <person name="Zivanovic Y."/>
            <person name="Bolotin-Fukuhara M."/>
            <person name="Thierry A."/>
            <person name="Bouchier C."/>
            <person name="Caudron B."/>
            <person name="Scarpelli C."/>
            <person name="Gaillardin C."/>
            <person name="Weissenbach J."/>
            <person name="Wincker P."/>
            <person name="Souciet J.-L."/>
        </authorList>
    </citation>
    <scope>NUCLEOTIDE SEQUENCE [LARGE SCALE GENOMIC DNA]</scope>
    <source>
        <strain>ATCC 8585 / CBS 2359 / DSM 70799 / NBRC 1267 / NRRL Y-1140 / WM37</strain>
    </source>
</reference>
<gene>
    <name type="ordered locus">KLLA0E15862g</name>
</gene>
<evidence type="ECO:0000256" key="1">
    <source>
        <dbReference type="SAM" id="MobiDB-lite"/>
    </source>
</evidence>
<evidence type="ECO:0000305" key="2"/>
<dbReference type="EMBL" id="CR382125">
    <property type="protein sequence ID" value="CAG99748.1"/>
    <property type="molecule type" value="Genomic_DNA"/>
</dbReference>
<dbReference type="RefSeq" id="XP_454661.1">
    <property type="nucleotide sequence ID" value="XM_454661.1"/>
</dbReference>
<dbReference type="SMR" id="Q6CN28"/>
<dbReference type="FunCoup" id="Q6CN28">
    <property type="interactions" value="86"/>
</dbReference>
<dbReference type="STRING" id="284590.Q6CN28"/>
<dbReference type="PaxDb" id="284590-Q6CN28"/>
<dbReference type="KEGG" id="kla:KLLA0_E15775g"/>
<dbReference type="eggNOG" id="ENOG502QTAZ">
    <property type="taxonomic scope" value="Eukaryota"/>
</dbReference>
<dbReference type="HOGENOM" id="CLU_027501_3_0_1"/>
<dbReference type="InParanoid" id="Q6CN28"/>
<dbReference type="OMA" id="HEQNEST"/>
<dbReference type="Proteomes" id="UP000000598">
    <property type="component" value="Chromosome E"/>
</dbReference>
<dbReference type="GO" id="GO:0043332">
    <property type="term" value="C:mating projection tip"/>
    <property type="evidence" value="ECO:0007669"/>
    <property type="project" value="TreeGrafter"/>
</dbReference>
<dbReference type="GO" id="GO:0070880">
    <property type="term" value="P:fungal-type cell wall beta-glucan biosynthetic process"/>
    <property type="evidence" value="ECO:0007669"/>
    <property type="project" value="TreeGrafter"/>
</dbReference>
<dbReference type="Gene3D" id="3.40.1580.10">
    <property type="entry name" value="SMI1/KNR4-like"/>
    <property type="match status" value="1"/>
</dbReference>
<dbReference type="InterPro" id="IPR009203">
    <property type="entry name" value="Knr4/Smi1"/>
</dbReference>
<dbReference type="InterPro" id="IPR018958">
    <property type="entry name" value="Knr4/Smi1-like_dom"/>
</dbReference>
<dbReference type="InterPro" id="IPR037883">
    <property type="entry name" value="Knr4/Smi1-like_sf"/>
</dbReference>
<dbReference type="InterPro" id="IPR051873">
    <property type="entry name" value="KNR4/SMI1_regulator"/>
</dbReference>
<dbReference type="PANTHER" id="PTHR47432">
    <property type="entry name" value="CELL WALL ASSEMBLY REGULATOR SMI1"/>
    <property type="match status" value="1"/>
</dbReference>
<dbReference type="PANTHER" id="PTHR47432:SF1">
    <property type="entry name" value="CELL WALL ASSEMBLY REGULATOR SMI1"/>
    <property type="match status" value="1"/>
</dbReference>
<dbReference type="Pfam" id="PF09346">
    <property type="entry name" value="SMI1_KNR4"/>
    <property type="match status" value="1"/>
</dbReference>
<dbReference type="PIRSF" id="PIRSF017023">
    <property type="entry name" value="KNR4"/>
    <property type="match status" value="1"/>
</dbReference>
<dbReference type="SMART" id="SM00860">
    <property type="entry name" value="SMI1_KNR4"/>
    <property type="match status" value="1"/>
</dbReference>
<dbReference type="SUPFAM" id="SSF160631">
    <property type="entry name" value="SMI1/KNR4-like"/>
    <property type="match status" value="1"/>
</dbReference>
<keyword id="KW-1185">Reference proteome</keyword>
<feature type="chain" id="PRO_0000209876" description="KNR4/SMI1 homolog">
    <location>
        <begin position="1"/>
        <end position="535"/>
    </location>
</feature>
<feature type="region of interest" description="Disordered" evidence="1">
    <location>
        <begin position="354"/>
        <end position="535"/>
    </location>
</feature>
<feature type="compositionally biased region" description="Basic and acidic residues" evidence="1">
    <location>
        <begin position="354"/>
        <end position="363"/>
    </location>
</feature>
<feature type="compositionally biased region" description="Polar residues" evidence="1">
    <location>
        <begin position="364"/>
        <end position="384"/>
    </location>
</feature>
<feature type="compositionally biased region" description="Polar residues" evidence="1">
    <location>
        <begin position="397"/>
        <end position="407"/>
    </location>
</feature>
<feature type="compositionally biased region" description="Polar residues" evidence="1">
    <location>
        <begin position="456"/>
        <end position="469"/>
    </location>
</feature>
<feature type="compositionally biased region" description="Basic and acidic residues" evidence="1">
    <location>
        <begin position="474"/>
        <end position="483"/>
    </location>
</feature>
<feature type="compositionally biased region" description="Basic residues" evidence="1">
    <location>
        <begin position="484"/>
        <end position="494"/>
    </location>
</feature>
<feature type="compositionally biased region" description="Basic and acidic residues" evidence="1">
    <location>
        <begin position="495"/>
        <end position="509"/>
    </location>
</feature>
<feature type="compositionally biased region" description="Basic and acidic residues" evidence="1">
    <location>
        <begin position="524"/>
        <end position="535"/>
    </location>
</feature>
<accession>Q6CN28</accession>
<protein>
    <recommendedName>
        <fullName>KNR4/SMI1 homolog</fullName>
    </recommendedName>
</protein>